<name>IMPE2_DROME</name>
<accession>P29681</accession>
<accession>Q9VZN9</accession>
<comment type="function">
    <text>Probably has an essential role in embryogenesis, induces morphogenesis of imaginal disks, and may participate in multimolecular aggregates.</text>
</comment>
<comment type="subcellular location">
    <subcellularLocation>
        <location>Secreted</location>
    </subcellularLocation>
    <text>Secreted from the apical cell surface.</text>
</comment>
<comment type="developmental stage">
    <text>Produced during mid embryogenesis, and imaginal disk morphogenesis.</text>
</comment>
<comment type="domain">
    <text>The regions 203-253, 256-333 and 335-377 are thought to contain either alpha helical or beta pleated sheet motifs.</text>
</comment>
<gene>
    <name type="primary">ImpE2</name>
    <name type="synonym">IMP-E2</name>
    <name type="ORF">CG1934</name>
</gene>
<evidence type="ECO:0000255" key="1"/>
<evidence type="ECO:0000256" key="2">
    <source>
        <dbReference type="SAM" id="MobiDB-lite"/>
    </source>
</evidence>
<sequence length="466" mass="49809">MKPVALILVFLAISQARVLNLPKEAIDIPVAIVEDKEPPVALSLVKEEVKAEEVKPEEVKPIAQEEKAKDLKEEVKPEIKPEIKEQPKPDIKDEIKEDLKADIKEELKEKIEEQINELPNAKPLELKEKSLEAEEKPQEIKEEVQQPEIKKEATEIKEEPAQNILKSLPAEETVVVPAEELSPNPVEQEQSENQDAAHPQVRQATQATPTQQSTTQGNFVQQLIQNSPIGQFLNQFQPQPAAAAAPAAAQVQADDAAAAAPATPAPTVPGFLNPQAAITSAQQAVQNAAQSAVNATTQAFQGIQQFASNLGNQFQNTLSSLTGQQQQAVSTTPRPPGPIQQFVNNVFGGNNNATAAAPPAQQSGNPLQGIINFLGGNRPQNAPAAAPATQATEKPAVDDKIDPANDEVGEFVPESDNELRASGENIDDSFEDAGVPSNEVIVVNDDAGEEGNAVQNHPVATDAVAL</sequence>
<proteinExistence type="evidence at protein level"/>
<keyword id="KW-0903">Direct protein sequencing</keyword>
<keyword id="KW-0325">Glycoprotein</keyword>
<keyword id="KW-1185">Reference proteome</keyword>
<keyword id="KW-0677">Repeat</keyword>
<keyword id="KW-0964">Secreted</keyword>
<keyword id="KW-0732">Signal</keyword>
<organism>
    <name type="scientific">Drosophila melanogaster</name>
    <name type="common">Fruit fly</name>
    <dbReference type="NCBI Taxonomy" id="7227"/>
    <lineage>
        <taxon>Eukaryota</taxon>
        <taxon>Metazoa</taxon>
        <taxon>Ecdysozoa</taxon>
        <taxon>Arthropoda</taxon>
        <taxon>Hexapoda</taxon>
        <taxon>Insecta</taxon>
        <taxon>Pterygota</taxon>
        <taxon>Neoptera</taxon>
        <taxon>Endopterygota</taxon>
        <taxon>Diptera</taxon>
        <taxon>Brachycera</taxon>
        <taxon>Muscomorpha</taxon>
        <taxon>Ephydroidea</taxon>
        <taxon>Drosophilidae</taxon>
        <taxon>Drosophila</taxon>
        <taxon>Sophophora</taxon>
    </lineage>
</organism>
<dbReference type="EMBL" id="M55099">
    <property type="protein sequence ID" value="AAA63632.1"/>
    <property type="molecule type" value="Genomic_DNA"/>
</dbReference>
<dbReference type="EMBL" id="AE014296">
    <property type="protein sequence ID" value="AAF47780.1"/>
    <property type="molecule type" value="Genomic_DNA"/>
</dbReference>
<dbReference type="EMBL" id="AY061270">
    <property type="protein sequence ID" value="AAL28818.1"/>
    <property type="molecule type" value="mRNA"/>
</dbReference>
<dbReference type="PIR" id="A37351">
    <property type="entry name" value="A37351"/>
</dbReference>
<dbReference type="RefSeq" id="NP_476580.1">
    <property type="nucleotide sequence ID" value="NM_057232.5"/>
</dbReference>
<dbReference type="SMR" id="P29681"/>
<dbReference type="BioGRID" id="63925">
    <property type="interactions" value="1"/>
</dbReference>
<dbReference type="DIP" id="DIP-22976N"/>
<dbReference type="IntAct" id="P29681">
    <property type="interactions" value="1"/>
</dbReference>
<dbReference type="STRING" id="7227.FBpp0073000"/>
<dbReference type="GlyCosmos" id="P29681">
    <property type="glycosylation" value="2 sites, No reported glycans"/>
</dbReference>
<dbReference type="GlyGen" id="P29681">
    <property type="glycosylation" value="4 sites"/>
</dbReference>
<dbReference type="PaxDb" id="7227-FBpp0073000"/>
<dbReference type="DNASU" id="38432"/>
<dbReference type="EnsemblMetazoa" id="FBtr0073141">
    <property type="protein sequence ID" value="FBpp0073000"/>
    <property type="gene ID" value="FBgn0001254"/>
</dbReference>
<dbReference type="GeneID" id="38432"/>
<dbReference type="KEGG" id="dme:Dmel_CG1934"/>
<dbReference type="AGR" id="FB:FBgn0001254"/>
<dbReference type="CTD" id="38432"/>
<dbReference type="FlyBase" id="FBgn0001254">
    <property type="gene designation" value="ImpE2"/>
</dbReference>
<dbReference type="VEuPathDB" id="VectorBase:FBgn0001254"/>
<dbReference type="eggNOG" id="ENOG502SBRS">
    <property type="taxonomic scope" value="Eukaryota"/>
</dbReference>
<dbReference type="HOGENOM" id="CLU_615773_0_0_1"/>
<dbReference type="InParanoid" id="P29681"/>
<dbReference type="OMA" id="QNPLQGI"/>
<dbReference type="OrthoDB" id="8064819at2759"/>
<dbReference type="PhylomeDB" id="P29681"/>
<dbReference type="BioGRID-ORCS" id="38432">
    <property type="hits" value="0 hits in 1 CRISPR screen"/>
</dbReference>
<dbReference type="ChiTaRS" id="ImpE2">
    <property type="organism name" value="fly"/>
</dbReference>
<dbReference type="GenomeRNAi" id="38432"/>
<dbReference type="PRO" id="PR:P29681"/>
<dbReference type="Proteomes" id="UP000000803">
    <property type="component" value="Chromosome 3L"/>
</dbReference>
<dbReference type="Bgee" id="FBgn0001254">
    <property type="expression patterns" value="Expressed in wing disc and 30 other cell types or tissues"/>
</dbReference>
<dbReference type="GO" id="GO:0005737">
    <property type="term" value="C:cytoplasm"/>
    <property type="evidence" value="ECO:0000314"/>
    <property type="project" value="FlyBase"/>
</dbReference>
<dbReference type="GO" id="GO:0005576">
    <property type="term" value="C:extracellular region"/>
    <property type="evidence" value="ECO:0000314"/>
    <property type="project" value="FlyBase"/>
</dbReference>
<dbReference type="GO" id="GO:0019898">
    <property type="term" value="C:extrinsic component of membrane"/>
    <property type="evidence" value="ECO:0000304"/>
    <property type="project" value="FlyBase"/>
</dbReference>
<dbReference type="GO" id="GO:0007561">
    <property type="term" value="P:imaginal disc eversion"/>
    <property type="evidence" value="ECO:0000304"/>
    <property type="project" value="FlyBase"/>
</dbReference>
<protein>
    <recommendedName>
        <fullName>20-hydroxyecdysone protein</fullName>
        <shortName>20-HE</shortName>
    </recommendedName>
</protein>
<reference key="1">
    <citation type="journal article" date="1990" name="Dev. Biol.">
        <title>The Drosophila IMP-E2 gene encodes an apically secreted protein expressed during imaginal disc morphogenesis.</title>
        <authorList>
            <person name="Paine-Saunders S."/>
            <person name="Fristrom D."/>
            <person name="Fristrom J.W."/>
        </authorList>
    </citation>
    <scope>NUCLEOTIDE SEQUENCE [GENOMIC DNA]</scope>
    <scope>PROTEIN SEQUENCE OF 444-454</scope>
</reference>
<reference key="2">
    <citation type="journal article" date="2000" name="Science">
        <title>The genome sequence of Drosophila melanogaster.</title>
        <authorList>
            <person name="Adams M.D."/>
            <person name="Celniker S.E."/>
            <person name="Holt R.A."/>
            <person name="Evans C.A."/>
            <person name="Gocayne J.D."/>
            <person name="Amanatides P.G."/>
            <person name="Scherer S.E."/>
            <person name="Li P.W."/>
            <person name="Hoskins R.A."/>
            <person name="Galle R.F."/>
            <person name="George R.A."/>
            <person name="Lewis S.E."/>
            <person name="Richards S."/>
            <person name="Ashburner M."/>
            <person name="Henderson S.N."/>
            <person name="Sutton G.G."/>
            <person name="Wortman J.R."/>
            <person name="Yandell M.D."/>
            <person name="Zhang Q."/>
            <person name="Chen L.X."/>
            <person name="Brandon R.C."/>
            <person name="Rogers Y.-H.C."/>
            <person name="Blazej R.G."/>
            <person name="Champe M."/>
            <person name="Pfeiffer B.D."/>
            <person name="Wan K.H."/>
            <person name="Doyle C."/>
            <person name="Baxter E.G."/>
            <person name="Helt G."/>
            <person name="Nelson C.R."/>
            <person name="Miklos G.L.G."/>
            <person name="Abril J.F."/>
            <person name="Agbayani A."/>
            <person name="An H.-J."/>
            <person name="Andrews-Pfannkoch C."/>
            <person name="Baldwin D."/>
            <person name="Ballew R.M."/>
            <person name="Basu A."/>
            <person name="Baxendale J."/>
            <person name="Bayraktaroglu L."/>
            <person name="Beasley E.M."/>
            <person name="Beeson K.Y."/>
            <person name="Benos P.V."/>
            <person name="Berman B.P."/>
            <person name="Bhandari D."/>
            <person name="Bolshakov S."/>
            <person name="Borkova D."/>
            <person name="Botchan M.R."/>
            <person name="Bouck J."/>
            <person name="Brokstein P."/>
            <person name="Brottier P."/>
            <person name="Burtis K.C."/>
            <person name="Busam D.A."/>
            <person name="Butler H."/>
            <person name="Cadieu E."/>
            <person name="Center A."/>
            <person name="Chandra I."/>
            <person name="Cherry J.M."/>
            <person name="Cawley S."/>
            <person name="Dahlke C."/>
            <person name="Davenport L.B."/>
            <person name="Davies P."/>
            <person name="de Pablos B."/>
            <person name="Delcher A."/>
            <person name="Deng Z."/>
            <person name="Mays A.D."/>
            <person name="Dew I."/>
            <person name="Dietz S.M."/>
            <person name="Dodson K."/>
            <person name="Doup L.E."/>
            <person name="Downes M."/>
            <person name="Dugan-Rocha S."/>
            <person name="Dunkov B.C."/>
            <person name="Dunn P."/>
            <person name="Durbin K.J."/>
            <person name="Evangelista C.C."/>
            <person name="Ferraz C."/>
            <person name="Ferriera S."/>
            <person name="Fleischmann W."/>
            <person name="Fosler C."/>
            <person name="Gabrielian A.E."/>
            <person name="Garg N.S."/>
            <person name="Gelbart W.M."/>
            <person name="Glasser K."/>
            <person name="Glodek A."/>
            <person name="Gong F."/>
            <person name="Gorrell J.H."/>
            <person name="Gu Z."/>
            <person name="Guan P."/>
            <person name="Harris M."/>
            <person name="Harris N.L."/>
            <person name="Harvey D.A."/>
            <person name="Heiman T.J."/>
            <person name="Hernandez J.R."/>
            <person name="Houck J."/>
            <person name="Hostin D."/>
            <person name="Houston K.A."/>
            <person name="Howland T.J."/>
            <person name="Wei M.-H."/>
            <person name="Ibegwam C."/>
            <person name="Jalali M."/>
            <person name="Kalush F."/>
            <person name="Karpen G.H."/>
            <person name="Ke Z."/>
            <person name="Kennison J.A."/>
            <person name="Ketchum K.A."/>
            <person name="Kimmel B.E."/>
            <person name="Kodira C.D."/>
            <person name="Kraft C.L."/>
            <person name="Kravitz S."/>
            <person name="Kulp D."/>
            <person name="Lai Z."/>
            <person name="Lasko P."/>
            <person name="Lei Y."/>
            <person name="Levitsky A.A."/>
            <person name="Li J.H."/>
            <person name="Li Z."/>
            <person name="Liang Y."/>
            <person name="Lin X."/>
            <person name="Liu X."/>
            <person name="Mattei B."/>
            <person name="McIntosh T.C."/>
            <person name="McLeod M.P."/>
            <person name="McPherson D."/>
            <person name="Merkulov G."/>
            <person name="Milshina N.V."/>
            <person name="Mobarry C."/>
            <person name="Morris J."/>
            <person name="Moshrefi A."/>
            <person name="Mount S.M."/>
            <person name="Moy M."/>
            <person name="Murphy B."/>
            <person name="Murphy L."/>
            <person name="Muzny D.M."/>
            <person name="Nelson D.L."/>
            <person name="Nelson D.R."/>
            <person name="Nelson K.A."/>
            <person name="Nixon K."/>
            <person name="Nusskern D.R."/>
            <person name="Pacleb J.M."/>
            <person name="Palazzolo M."/>
            <person name="Pittman G.S."/>
            <person name="Pan S."/>
            <person name="Pollard J."/>
            <person name="Puri V."/>
            <person name="Reese M.G."/>
            <person name="Reinert K."/>
            <person name="Remington K."/>
            <person name="Saunders R.D.C."/>
            <person name="Scheeler F."/>
            <person name="Shen H."/>
            <person name="Shue B.C."/>
            <person name="Siden-Kiamos I."/>
            <person name="Simpson M."/>
            <person name="Skupski M.P."/>
            <person name="Smith T.J."/>
            <person name="Spier E."/>
            <person name="Spradling A.C."/>
            <person name="Stapleton M."/>
            <person name="Strong R."/>
            <person name="Sun E."/>
            <person name="Svirskas R."/>
            <person name="Tector C."/>
            <person name="Turner R."/>
            <person name="Venter E."/>
            <person name="Wang A.H."/>
            <person name="Wang X."/>
            <person name="Wang Z.-Y."/>
            <person name="Wassarman D.A."/>
            <person name="Weinstock G.M."/>
            <person name="Weissenbach J."/>
            <person name="Williams S.M."/>
            <person name="Woodage T."/>
            <person name="Worley K.C."/>
            <person name="Wu D."/>
            <person name="Yang S."/>
            <person name="Yao Q.A."/>
            <person name="Ye J."/>
            <person name="Yeh R.-F."/>
            <person name="Zaveri J.S."/>
            <person name="Zhan M."/>
            <person name="Zhang G."/>
            <person name="Zhao Q."/>
            <person name="Zheng L."/>
            <person name="Zheng X.H."/>
            <person name="Zhong F.N."/>
            <person name="Zhong W."/>
            <person name="Zhou X."/>
            <person name="Zhu S.C."/>
            <person name="Zhu X."/>
            <person name="Smith H.O."/>
            <person name="Gibbs R.A."/>
            <person name="Myers E.W."/>
            <person name="Rubin G.M."/>
            <person name="Venter J.C."/>
        </authorList>
    </citation>
    <scope>NUCLEOTIDE SEQUENCE [LARGE SCALE GENOMIC DNA]</scope>
    <source>
        <strain>Berkeley</strain>
    </source>
</reference>
<reference key="3">
    <citation type="journal article" date="2002" name="Genome Biol.">
        <title>Annotation of the Drosophila melanogaster euchromatic genome: a systematic review.</title>
        <authorList>
            <person name="Misra S."/>
            <person name="Crosby M.A."/>
            <person name="Mungall C.J."/>
            <person name="Matthews B.B."/>
            <person name="Campbell K.S."/>
            <person name="Hradecky P."/>
            <person name="Huang Y."/>
            <person name="Kaminker J.S."/>
            <person name="Millburn G.H."/>
            <person name="Prochnik S.E."/>
            <person name="Smith C.D."/>
            <person name="Tupy J.L."/>
            <person name="Whitfield E.J."/>
            <person name="Bayraktaroglu L."/>
            <person name="Berman B.P."/>
            <person name="Bettencourt B.R."/>
            <person name="Celniker S.E."/>
            <person name="de Grey A.D.N.J."/>
            <person name="Drysdale R.A."/>
            <person name="Harris N.L."/>
            <person name="Richter J."/>
            <person name="Russo S."/>
            <person name="Schroeder A.J."/>
            <person name="Shu S.Q."/>
            <person name="Stapleton M."/>
            <person name="Yamada C."/>
            <person name="Ashburner M."/>
            <person name="Gelbart W.M."/>
            <person name="Rubin G.M."/>
            <person name="Lewis S.E."/>
        </authorList>
    </citation>
    <scope>GENOME REANNOTATION</scope>
    <source>
        <strain>Berkeley</strain>
    </source>
</reference>
<reference key="4">
    <citation type="journal article" date="2002" name="Genome Biol.">
        <title>A Drosophila full-length cDNA resource.</title>
        <authorList>
            <person name="Stapleton M."/>
            <person name="Carlson J.W."/>
            <person name="Brokstein P."/>
            <person name="Yu C."/>
            <person name="Champe M."/>
            <person name="George R.A."/>
            <person name="Guarin H."/>
            <person name="Kronmiller B."/>
            <person name="Pacleb J.M."/>
            <person name="Park S."/>
            <person name="Wan K.H."/>
            <person name="Rubin G.M."/>
            <person name="Celniker S.E."/>
        </authorList>
    </citation>
    <scope>NUCLEOTIDE SEQUENCE [LARGE SCALE MRNA]</scope>
    <source>
        <strain>Berkeley</strain>
        <tissue>Embryo</tissue>
    </source>
</reference>
<feature type="signal peptide" evidence="1">
    <location>
        <begin position="1"/>
        <end position="16"/>
    </location>
</feature>
<feature type="chain" id="PRO_0000021510" description="20-hydroxyecdysone protein">
    <location>
        <begin position="17"/>
        <end position="466"/>
    </location>
</feature>
<feature type="repeat" description="1; approximate">
    <location>
        <begin position="48"/>
        <end position="50"/>
    </location>
</feature>
<feature type="repeat" description="2; approximate">
    <location>
        <begin position="53"/>
        <end position="55"/>
    </location>
</feature>
<feature type="repeat" description="3; approximate">
    <location>
        <begin position="58"/>
        <end position="60"/>
    </location>
</feature>
<feature type="repeat" description="4; approximate">
    <location>
        <begin position="70"/>
        <end position="72"/>
    </location>
</feature>
<feature type="repeat" description="5; approximate">
    <location>
        <begin position="74"/>
        <end position="76"/>
    </location>
</feature>
<feature type="repeat" description="6; approximate">
    <location>
        <begin position="78"/>
        <end position="80"/>
    </location>
</feature>
<feature type="repeat" description="7; approximate">
    <location>
        <begin position="82"/>
        <end position="84"/>
    </location>
</feature>
<feature type="repeat" description="8; approximate">
    <location>
        <begin position="90"/>
        <end position="92"/>
    </location>
</feature>
<feature type="repeat" description="9; approximate">
    <location>
        <begin position="94"/>
        <end position="96"/>
    </location>
</feature>
<feature type="repeat" description="10; approximate">
    <location>
        <begin position="98"/>
        <end position="100"/>
    </location>
</feature>
<feature type="repeat" description="11; approximate">
    <location>
        <begin position="102"/>
        <end position="104"/>
    </location>
</feature>
<feature type="repeat" description="12; approximate">
    <location>
        <begin position="106"/>
        <end position="108"/>
    </location>
</feature>
<feature type="repeat" description="13; approximate">
    <location>
        <begin position="125"/>
        <end position="127"/>
    </location>
</feature>
<feature type="repeat" description="14; approximate">
    <location>
        <begin position="139"/>
        <end position="141"/>
    </location>
</feature>
<feature type="repeat" description="15; approximate">
    <location>
        <begin position="148"/>
        <end position="150"/>
    </location>
</feature>
<feature type="repeat" description="16; approximate">
    <location>
        <begin position="155"/>
        <end position="157"/>
    </location>
</feature>
<feature type="region of interest" description="16 X repeats">
    <location>
        <begin position="48"/>
        <end position="157"/>
    </location>
</feature>
<feature type="region of interest" description="Disordered" evidence="2">
    <location>
        <begin position="55"/>
        <end position="94"/>
    </location>
</feature>
<feature type="region of interest" description="Disordered" evidence="2">
    <location>
        <begin position="119"/>
        <end position="220"/>
    </location>
</feature>
<feature type="region of interest" description="Disordered" evidence="2">
    <location>
        <begin position="378"/>
        <end position="435"/>
    </location>
</feature>
<feature type="compositionally biased region" description="Basic and acidic residues" evidence="2">
    <location>
        <begin position="124"/>
        <end position="160"/>
    </location>
</feature>
<feature type="compositionally biased region" description="Low complexity" evidence="2">
    <location>
        <begin position="170"/>
        <end position="180"/>
    </location>
</feature>
<feature type="compositionally biased region" description="Polar residues" evidence="2">
    <location>
        <begin position="185"/>
        <end position="194"/>
    </location>
</feature>
<feature type="compositionally biased region" description="Low complexity" evidence="2">
    <location>
        <begin position="203"/>
        <end position="216"/>
    </location>
</feature>
<feature type="compositionally biased region" description="Low complexity" evidence="2">
    <location>
        <begin position="379"/>
        <end position="394"/>
    </location>
</feature>
<feature type="compositionally biased region" description="Acidic residues" evidence="2">
    <location>
        <begin position="404"/>
        <end position="416"/>
    </location>
</feature>
<feature type="glycosylation site" description="N-linked (GlcNAc...) asparagine" evidence="1">
    <location>
        <position position="294"/>
    </location>
</feature>
<feature type="glycosylation site" description="N-linked (GlcNAc...) asparagine" evidence="1">
    <location>
        <position position="352"/>
    </location>
</feature>